<comment type="function">
    <text evidence="1">This protein is one of the two subunits of integration host factor, a specific DNA-binding protein that functions in genetic recombination as well as in transcriptional and translational control.</text>
</comment>
<comment type="subunit">
    <text evidence="1">Heterodimer of an alpha and a beta chain.</text>
</comment>
<comment type="similarity">
    <text evidence="2">Belongs to the bacterial histone-like protein family.</text>
</comment>
<dbReference type="EMBL" id="AE005674">
    <property type="protein sequence ID" value="AAN42538.1"/>
    <property type="molecule type" value="Genomic_DNA"/>
</dbReference>
<dbReference type="EMBL" id="AE014073">
    <property type="protein sequence ID" value="AAP16424.1"/>
    <property type="molecule type" value="Genomic_DNA"/>
</dbReference>
<dbReference type="RefSeq" id="NP_706831.1">
    <property type="nucleotide sequence ID" value="NC_004337.2"/>
</dbReference>
<dbReference type="RefSeq" id="WP_000167336.1">
    <property type="nucleotide sequence ID" value="NZ_WPGW01000072.1"/>
</dbReference>
<dbReference type="SMR" id="P0A6Y4"/>
<dbReference type="STRING" id="198214.SF0908"/>
<dbReference type="PaxDb" id="198214-SF0908"/>
<dbReference type="GeneID" id="1023862"/>
<dbReference type="GeneID" id="93776505"/>
<dbReference type="KEGG" id="sfl:SF0908"/>
<dbReference type="KEGG" id="sfx:S0972"/>
<dbReference type="PATRIC" id="fig|198214.7.peg.1057"/>
<dbReference type="HOGENOM" id="CLU_105066_2_0_6"/>
<dbReference type="Proteomes" id="UP000001006">
    <property type="component" value="Chromosome"/>
</dbReference>
<dbReference type="Proteomes" id="UP000002673">
    <property type="component" value="Chromosome"/>
</dbReference>
<dbReference type="GO" id="GO:0005694">
    <property type="term" value="C:chromosome"/>
    <property type="evidence" value="ECO:0007669"/>
    <property type="project" value="InterPro"/>
</dbReference>
<dbReference type="GO" id="GO:0005829">
    <property type="term" value="C:cytosol"/>
    <property type="evidence" value="ECO:0007669"/>
    <property type="project" value="TreeGrafter"/>
</dbReference>
<dbReference type="GO" id="GO:0003677">
    <property type="term" value="F:DNA binding"/>
    <property type="evidence" value="ECO:0007669"/>
    <property type="project" value="UniProtKB-UniRule"/>
</dbReference>
<dbReference type="GO" id="GO:0030527">
    <property type="term" value="F:structural constituent of chromatin"/>
    <property type="evidence" value="ECO:0007669"/>
    <property type="project" value="InterPro"/>
</dbReference>
<dbReference type="GO" id="GO:0006310">
    <property type="term" value="P:DNA recombination"/>
    <property type="evidence" value="ECO:0007669"/>
    <property type="project" value="UniProtKB-UniRule"/>
</dbReference>
<dbReference type="GO" id="GO:0006355">
    <property type="term" value="P:regulation of DNA-templated transcription"/>
    <property type="evidence" value="ECO:0007669"/>
    <property type="project" value="UniProtKB-UniRule"/>
</dbReference>
<dbReference type="GO" id="GO:0006417">
    <property type="term" value="P:regulation of translation"/>
    <property type="evidence" value="ECO:0007669"/>
    <property type="project" value="UniProtKB-UniRule"/>
</dbReference>
<dbReference type="CDD" id="cd13836">
    <property type="entry name" value="IHF_B"/>
    <property type="match status" value="1"/>
</dbReference>
<dbReference type="FunFam" id="4.10.520.10:FF:000003">
    <property type="entry name" value="Integration host factor subunit beta"/>
    <property type="match status" value="1"/>
</dbReference>
<dbReference type="Gene3D" id="4.10.520.10">
    <property type="entry name" value="IHF-like DNA-binding proteins"/>
    <property type="match status" value="1"/>
</dbReference>
<dbReference type="HAMAP" id="MF_00381">
    <property type="entry name" value="IHF_beta"/>
    <property type="match status" value="1"/>
</dbReference>
<dbReference type="InterPro" id="IPR000119">
    <property type="entry name" value="Hist_DNA-bd"/>
</dbReference>
<dbReference type="InterPro" id="IPR020816">
    <property type="entry name" value="Histone-like_DNA-bd_CS"/>
</dbReference>
<dbReference type="InterPro" id="IPR010992">
    <property type="entry name" value="IHF-like_DNA-bd_dom_sf"/>
</dbReference>
<dbReference type="InterPro" id="IPR005685">
    <property type="entry name" value="IHF_beta"/>
</dbReference>
<dbReference type="NCBIfam" id="TIGR00988">
    <property type="entry name" value="hip"/>
    <property type="match status" value="1"/>
</dbReference>
<dbReference type="NCBIfam" id="NF001222">
    <property type="entry name" value="PRK00199.1"/>
    <property type="match status" value="1"/>
</dbReference>
<dbReference type="PANTHER" id="PTHR33175">
    <property type="entry name" value="DNA-BINDING PROTEIN HU"/>
    <property type="match status" value="1"/>
</dbReference>
<dbReference type="PANTHER" id="PTHR33175:SF5">
    <property type="entry name" value="INTEGRATION HOST FACTOR SUBUNIT BETA"/>
    <property type="match status" value="1"/>
</dbReference>
<dbReference type="Pfam" id="PF00216">
    <property type="entry name" value="Bac_DNA_binding"/>
    <property type="match status" value="1"/>
</dbReference>
<dbReference type="PRINTS" id="PR01727">
    <property type="entry name" value="DNABINDINGHU"/>
</dbReference>
<dbReference type="SMART" id="SM00411">
    <property type="entry name" value="BHL"/>
    <property type="match status" value="1"/>
</dbReference>
<dbReference type="SUPFAM" id="SSF47729">
    <property type="entry name" value="IHF-like DNA-binding proteins"/>
    <property type="match status" value="1"/>
</dbReference>
<dbReference type="PROSITE" id="PS00045">
    <property type="entry name" value="HISTONE_LIKE"/>
    <property type="match status" value="1"/>
</dbReference>
<accession>P0A6Y4</accession>
<accession>P08756</accession>
<reference key="1">
    <citation type="journal article" date="2002" name="Nucleic Acids Res.">
        <title>Genome sequence of Shigella flexneri 2a: insights into pathogenicity through comparison with genomes of Escherichia coli K12 and O157.</title>
        <authorList>
            <person name="Jin Q."/>
            <person name="Yuan Z."/>
            <person name="Xu J."/>
            <person name="Wang Y."/>
            <person name="Shen Y."/>
            <person name="Lu W."/>
            <person name="Wang J."/>
            <person name="Liu H."/>
            <person name="Yang J."/>
            <person name="Yang F."/>
            <person name="Zhang X."/>
            <person name="Zhang J."/>
            <person name="Yang G."/>
            <person name="Wu H."/>
            <person name="Qu D."/>
            <person name="Dong J."/>
            <person name="Sun L."/>
            <person name="Xue Y."/>
            <person name="Zhao A."/>
            <person name="Gao Y."/>
            <person name="Zhu J."/>
            <person name="Kan B."/>
            <person name="Ding K."/>
            <person name="Chen S."/>
            <person name="Cheng H."/>
            <person name="Yao Z."/>
            <person name="He B."/>
            <person name="Chen R."/>
            <person name="Ma D."/>
            <person name="Qiang B."/>
            <person name="Wen Y."/>
            <person name="Hou Y."/>
            <person name="Yu J."/>
        </authorList>
    </citation>
    <scope>NUCLEOTIDE SEQUENCE [LARGE SCALE GENOMIC DNA]</scope>
    <source>
        <strain>301 / Serotype 2a</strain>
    </source>
</reference>
<reference key="2">
    <citation type="journal article" date="2003" name="Infect. Immun.">
        <title>Complete genome sequence and comparative genomics of Shigella flexneri serotype 2a strain 2457T.</title>
        <authorList>
            <person name="Wei J."/>
            <person name="Goldberg M.B."/>
            <person name="Burland V."/>
            <person name="Venkatesan M.M."/>
            <person name="Deng W."/>
            <person name="Fournier G."/>
            <person name="Mayhew G.F."/>
            <person name="Plunkett G. III"/>
            <person name="Rose D.J."/>
            <person name="Darling A."/>
            <person name="Mau B."/>
            <person name="Perna N.T."/>
            <person name="Payne S.M."/>
            <person name="Runyen-Janecky L.J."/>
            <person name="Zhou S."/>
            <person name="Schwartz D.C."/>
            <person name="Blattner F.R."/>
        </authorList>
    </citation>
    <scope>NUCLEOTIDE SEQUENCE [LARGE SCALE GENOMIC DNA]</scope>
    <source>
        <strain>ATCC 700930 / 2457T / Serotype 2a</strain>
    </source>
</reference>
<organism>
    <name type="scientific">Shigella flexneri</name>
    <dbReference type="NCBI Taxonomy" id="623"/>
    <lineage>
        <taxon>Bacteria</taxon>
        <taxon>Pseudomonadati</taxon>
        <taxon>Pseudomonadota</taxon>
        <taxon>Gammaproteobacteria</taxon>
        <taxon>Enterobacterales</taxon>
        <taxon>Enterobacteriaceae</taxon>
        <taxon>Shigella</taxon>
    </lineage>
</organism>
<feature type="chain" id="PRO_0000105072" description="Integration host factor subunit beta">
    <location>
        <begin position="1"/>
        <end position="94"/>
    </location>
</feature>
<gene>
    <name type="primary">ihfB</name>
    <name type="synonym">himD</name>
    <name type="ordered locus">SF0908</name>
    <name type="ordered locus">S0972</name>
</gene>
<evidence type="ECO:0000250" key="1"/>
<evidence type="ECO:0000305" key="2"/>
<protein>
    <recommendedName>
        <fullName>Integration host factor subunit beta</fullName>
        <shortName>IHF-beta</shortName>
    </recommendedName>
</protein>
<name>IHFB_SHIFL</name>
<proteinExistence type="inferred from homology"/>
<keyword id="KW-0233">DNA recombination</keyword>
<keyword id="KW-0238">DNA-binding</keyword>
<keyword id="KW-1185">Reference proteome</keyword>
<keyword id="KW-0804">Transcription</keyword>
<keyword id="KW-0805">Transcription regulation</keyword>
<keyword id="KW-0810">Translation regulation</keyword>
<sequence>MTKSELIERLATQQSHIPAKTVEDAVKEMLEHMASTLAQGERIEIRGFGSFSLHYRAPRTGRNPKTGDKVELEGKYVPHFKPGKELRDRANIYG</sequence>